<dbReference type="EC" id="4.2.1.11" evidence="1"/>
<dbReference type="EMBL" id="CP000096">
    <property type="protein sequence ID" value="ABB24814.1"/>
    <property type="molecule type" value="Genomic_DNA"/>
</dbReference>
<dbReference type="RefSeq" id="WP_011358684.1">
    <property type="nucleotide sequence ID" value="NC_007512.1"/>
</dbReference>
<dbReference type="SMR" id="Q3B1G7"/>
<dbReference type="STRING" id="319225.Plut_1972"/>
<dbReference type="KEGG" id="plt:Plut_1972"/>
<dbReference type="eggNOG" id="COG0148">
    <property type="taxonomic scope" value="Bacteria"/>
</dbReference>
<dbReference type="HOGENOM" id="CLU_031223_2_1_10"/>
<dbReference type="OrthoDB" id="9804716at2"/>
<dbReference type="UniPathway" id="UPA00109">
    <property type="reaction ID" value="UER00187"/>
</dbReference>
<dbReference type="Proteomes" id="UP000002709">
    <property type="component" value="Chromosome"/>
</dbReference>
<dbReference type="GO" id="GO:0009986">
    <property type="term" value="C:cell surface"/>
    <property type="evidence" value="ECO:0007669"/>
    <property type="project" value="UniProtKB-SubCell"/>
</dbReference>
<dbReference type="GO" id="GO:0005576">
    <property type="term" value="C:extracellular region"/>
    <property type="evidence" value="ECO:0007669"/>
    <property type="project" value="UniProtKB-SubCell"/>
</dbReference>
<dbReference type="GO" id="GO:0000015">
    <property type="term" value="C:phosphopyruvate hydratase complex"/>
    <property type="evidence" value="ECO:0007669"/>
    <property type="project" value="InterPro"/>
</dbReference>
<dbReference type="GO" id="GO:0000287">
    <property type="term" value="F:magnesium ion binding"/>
    <property type="evidence" value="ECO:0007669"/>
    <property type="project" value="UniProtKB-UniRule"/>
</dbReference>
<dbReference type="GO" id="GO:0004634">
    <property type="term" value="F:phosphopyruvate hydratase activity"/>
    <property type="evidence" value="ECO:0007669"/>
    <property type="project" value="UniProtKB-UniRule"/>
</dbReference>
<dbReference type="GO" id="GO:0006096">
    <property type="term" value="P:glycolytic process"/>
    <property type="evidence" value="ECO:0007669"/>
    <property type="project" value="UniProtKB-UniRule"/>
</dbReference>
<dbReference type="CDD" id="cd03313">
    <property type="entry name" value="enolase"/>
    <property type="match status" value="1"/>
</dbReference>
<dbReference type="FunFam" id="3.20.20.120:FF:000001">
    <property type="entry name" value="Enolase"/>
    <property type="match status" value="1"/>
</dbReference>
<dbReference type="FunFam" id="3.30.390.10:FF:000001">
    <property type="entry name" value="Enolase"/>
    <property type="match status" value="1"/>
</dbReference>
<dbReference type="Gene3D" id="3.20.20.120">
    <property type="entry name" value="Enolase-like C-terminal domain"/>
    <property type="match status" value="1"/>
</dbReference>
<dbReference type="Gene3D" id="3.30.390.10">
    <property type="entry name" value="Enolase-like, N-terminal domain"/>
    <property type="match status" value="1"/>
</dbReference>
<dbReference type="HAMAP" id="MF_00318">
    <property type="entry name" value="Enolase"/>
    <property type="match status" value="1"/>
</dbReference>
<dbReference type="InterPro" id="IPR000941">
    <property type="entry name" value="Enolase"/>
</dbReference>
<dbReference type="InterPro" id="IPR036849">
    <property type="entry name" value="Enolase-like_C_sf"/>
</dbReference>
<dbReference type="InterPro" id="IPR029017">
    <property type="entry name" value="Enolase-like_N"/>
</dbReference>
<dbReference type="InterPro" id="IPR020810">
    <property type="entry name" value="Enolase_C"/>
</dbReference>
<dbReference type="InterPro" id="IPR020809">
    <property type="entry name" value="Enolase_CS"/>
</dbReference>
<dbReference type="InterPro" id="IPR020811">
    <property type="entry name" value="Enolase_N"/>
</dbReference>
<dbReference type="NCBIfam" id="TIGR01060">
    <property type="entry name" value="eno"/>
    <property type="match status" value="1"/>
</dbReference>
<dbReference type="PANTHER" id="PTHR11902">
    <property type="entry name" value="ENOLASE"/>
    <property type="match status" value="1"/>
</dbReference>
<dbReference type="PANTHER" id="PTHR11902:SF1">
    <property type="entry name" value="ENOLASE"/>
    <property type="match status" value="1"/>
</dbReference>
<dbReference type="Pfam" id="PF00113">
    <property type="entry name" value="Enolase_C"/>
    <property type="match status" value="1"/>
</dbReference>
<dbReference type="Pfam" id="PF03952">
    <property type="entry name" value="Enolase_N"/>
    <property type="match status" value="1"/>
</dbReference>
<dbReference type="PIRSF" id="PIRSF001400">
    <property type="entry name" value="Enolase"/>
    <property type="match status" value="1"/>
</dbReference>
<dbReference type="PRINTS" id="PR00148">
    <property type="entry name" value="ENOLASE"/>
</dbReference>
<dbReference type="SFLD" id="SFLDS00001">
    <property type="entry name" value="Enolase"/>
    <property type="match status" value="1"/>
</dbReference>
<dbReference type="SFLD" id="SFLDF00002">
    <property type="entry name" value="enolase"/>
    <property type="match status" value="1"/>
</dbReference>
<dbReference type="SMART" id="SM01192">
    <property type="entry name" value="Enolase_C"/>
    <property type="match status" value="1"/>
</dbReference>
<dbReference type="SMART" id="SM01193">
    <property type="entry name" value="Enolase_N"/>
    <property type="match status" value="1"/>
</dbReference>
<dbReference type="SUPFAM" id="SSF51604">
    <property type="entry name" value="Enolase C-terminal domain-like"/>
    <property type="match status" value="1"/>
</dbReference>
<dbReference type="SUPFAM" id="SSF54826">
    <property type="entry name" value="Enolase N-terminal domain-like"/>
    <property type="match status" value="1"/>
</dbReference>
<dbReference type="PROSITE" id="PS00164">
    <property type="entry name" value="ENOLASE"/>
    <property type="match status" value="1"/>
</dbReference>
<comment type="function">
    <text evidence="1">Catalyzes the reversible conversion of 2-phosphoglycerate (2-PG) into phosphoenolpyruvate (PEP). It is essential for the degradation of carbohydrates via glycolysis.</text>
</comment>
<comment type="catalytic activity">
    <reaction evidence="1">
        <text>(2R)-2-phosphoglycerate = phosphoenolpyruvate + H2O</text>
        <dbReference type="Rhea" id="RHEA:10164"/>
        <dbReference type="ChEBI" id="CHEBI:15377"/>
        <dbReference type="ChEBI" id="CHEBI:58289"/>
        <dbReference type="ChEBI" id="CHEBI:58702"/>
        <dbReference type="EC" id="4.2.1.11"/>
    </reaction>
</comment>
<comment type="cofactor">
    <cofactor evidence="1">
        <name>Mg(2+)</name>
        <dbReference type="ChEBI" id="CHEBI:18420"/>
    </cofactor>
    <text evidence="1">Binds a second Mg(2+) ion via substrate during catalysis.</text>
</comment>
<comment type="pathway">
    <text evidence="1">Carbohydrate degradation; glycolysis; pyruvate from D-glyceraldehyde 3-phosphate: step 4/5.</text>
</comment>
<comment type="subcellular location">
    <subcellularLocation>
        <location evidence="1">Cytoplasm</location>
    </subcellularLocation>
    <subcellularLocation>
        <location evidence="1">Secreted</location>
    </subcellularLocation>
    <subcellularLocation>
        <location evidence="1">Cell surface</location>
    </subcellularLocation>
    <text evidence="1">Fractions of enolase are present in both the cytoplasm and on the cell surface.</text>
</comment>
<comment type="similarity">
    <text evidence="1">Belongs to the enolase family.</text>
</comment>
<name>ENO_CHLL3</name>
<accession>Q3B1G7</accession>
<reference key="1">
    <citation type="submission" date="2005-08" db="EMBL/GenBank/DDBJ databases">
        <title>Complete sequence of Pelodictyon luteolum DSM 273.</title>
        <authorList>
            <consortium name="US DOE Joint Genome Institute"/>
            <person name="Copeland A."/>
            <person name="Lucas S."/>
            <person name="Lapidus A."/>
            <person name="Barry K."/>
            <person name="Detter J.C."/>
            <person name="Glavina T."/>
            <person name="Hammon N."/>
            <person name="Israni S."/>
            <person name="Pitluck S."/>
            <person name="Bryant D."/>
            <person name="Schmutz J."/>
            <person name="Larimer F."/>
            <person name="Land M."/>
            <person name="Kyrpides N."/>
            <person name="Ivanova N."/>
            <person name="Richardson P."/>
        </authorList>
    </citation>
    <scope>NUCLEOTIDE SEQUENCE [LARGE SCALE GENOMIC DNA]</scope>
    <source>
        <strain>DSM 273 / BCRC 81028 / 2530</strain>
    </source>
</reference>
<keyword id="KW-0963">Cytoplasm</keyword>
<keyword id="KW-0324">Glycolysis</keyword>
<keyword id="KW-0456">Lyase</keyword>
<keyword id="KW-0460">Magnesium</keyword>
<keyword id="KW-0479">Metal-binding</keyword>
<keyword id="KW-1185">Reference proteome</keyword>
<keyword id="KW-0964">Secreted</keyword>
<gene>
    <name evidence="1" type="primary">eno</name>
    <name type="ordered locus">Plut_1972</name>
</gene>
<protein>
    <recommendedName>
        <fullName evidence="1">Enolase</fullName>
        <ecNumber evidence="1">4.2.1.11</ecNumber>
    </recommendedName>
    <alternativeName>
        <fullName evidence="1">2-phospho-D-glycerate hydro-lyase</fullName>
    </alternativeName>
    <alternativeName>
        <fullName evidence="1">2-phosphoglycerate dehydratase</fullName>
    </alternativeName>
</protein>
<feature type="chain" id="PRO_0000267070" description="Enolase">
    <location>
        <begin position="1"/>
        <end position="437"/>
    </location>
</feature>
<feature type="active site" description="Proton donor" evidence="1">
    <location>
        <position position="204"/>
    </location>
</feature>
<feature type="active site" description="Proton acceptor" evidence="1">
    <location>
        <position position="349"/>
    </location>
</feature>
<feature type="binding site" evidence="1">
    <location>
        <position position="162"/>
    </location>
    <ligand>
        <name>(2R)-2-phosphoglycerate</name>
        <dbReference type="ChEBI" id="CHEBI:58289"/>
    </ligand>
</feature>
<feature type="binding site" evidence="1">
    <location>
        <position position="251"/>
    </location>
    <ligand>
        <name>Mg(2+)</name>
        <dbReference type="ChEBI" id="CHEBI:18420"/>
    </ligand>
</feature>
<feature type="binding site" evidence="1">
    <location>
        <position position="297"/>
    </location>
    <ligand>
        <name>Mg(2+)</name>
        <dbReference type="ChEBI" id="CHEBI:18420"/>
    </ligand>
</feature>
<feature type="binding site" evidence="1">
    <location>
        <position position="324"/>
    </location>
    <ligand>
        <name>Mg(2+)</name>
        <dbReference type="ChEBI" id="CHEBI:18420"/>
    </ligand>
</feature>
<feature type="binding site" evidence="1">
    <location>
        <position position="349"/>
    </location>
    <ligand>
        <name>(2R)-2-phosphoglycerate</name>
        <dbReference type="ChEBI" id="CHEBI:58289"/>
    </ligand>
</feature>
<feature type="binding site" evidence="1">
    <location>
        <position position="378"/>
    </location>
    <ligand>
        <name>(2R)-2-phosphoglycerate</name>
        <dbReference type="ChEBI" id="CHEBI:58289"/>
    </ligand>
</feature>
<feature type="binding site" evidence="1">
    <location>
        <position position="379"/>
    </location>
    <ligand>
        <name>(2R)-2-phosphoglycerate</name>
        <dbReference type="ChEBI" id="CHEBI:58289"/>
    </ligand>
</feature>
<feature type="binding site" evidence="1">
    <location>
        <position position="400"/>
    </location>
    <ligand>
        <name>(2R)-2-phosphoglycerate</name>
        <dbReference type="ChEBI" id="CHEBI:58289"/>
    </ligand>
</feature>
<evidence type="ECO:0000255" key="1">
    <source>
        <dbReference type="HAMAP-Rule" id="MF_00318"/>
    </source>
</evidence>
<organism>
    <name type="scientific">Chlorobium luteolum (strain DSM 273 / BCRC 81028 / 2530)</name>
    <name type="common">Pelodictyon luteolum</name>
    <dbReference type="NCBI Taxonomy" id="319225"/>
    <lineage>
        <taxon>Bacteria</taxon>
        <taxon>Pseudomonadati</taxon>
        <taxon>Chlorobiota</taxon>
        <taxon>Chlorobiia</taxon>
        <taxon>Chlorobiales</taxon>
        <taxon>Chlorobiaceae</taxon>
        <taxon>Chlorobium/Pelodictyon group</taxon>
        <taxon>Pelodictyon</taxon>
    </lineage>
</organism>
<sequence length="437" mass="47079">MPVIHKIHARQILDSRGNPTVEVDVYTESSFGRAAVPSGASTGVHEAVELRDGDKGVYLGKGVLKAVENVNTVIDEALRGMLVTEQEEIDARLLELDGTPNKSKLGANALLGVSMACAKAGAEYSGLSLFRYIGGTMANTLPVPMMNVLNGGAHADNTVDFQEFMIMPIGFSTYSDALRCGAEIFHALKALLHSRGLSTAVGDEGGFAPNLRSNEEAIELVVEAIGKAGYKAGSPASKGGLGDAQVMIALDPASSEFYDTEKKKYVFKKSDKRELSSEEMASYWEGWANTYPIISIEDGMAEDDWAGWKLLTEKIGDRVQLVGDDLFVTNSLRLAEGIEKGVGNSILIKVNQIGTLTETLRAIDLAKRNGYTSVISHRSGETEDSTIAQIAVATNAGQIKTGSMSRSDRMSKYNELLRIEEELGEQAIYPGKQAFRV</sequence>
<proteinExistence type="inferred from homology"/>